<keyword id="KW-0002">3D-structure</keyword>
<keyword id="KW-0143">Chaperone</keyword>
<keyword id="KW-1015">Disulfide bond</keyword>
<keyword id="KW-0256">Endoplasmic reticulum</keyword>
<keyword id="KW-0597">Phosphoprotein</keyword>
<keyword id="KW-1185">Reference proteome</keyword>
<keyword id="KW-0677">Repeat</keyword>
<keyword id="KW-0678">Repressor</keyword>
<keyword id="KW-0732">Signal</keyword>
<keyword id="KW-0346">Stress response</keyword>
<keyword id="KW-0802">TPR repeat</keyword>
<keyword id="KW-0810">Translation regulation</keyword>
<keyword id="KW-0834">Unfolded protein response</keyword>
<accession>Q91YW3</accession>
<accession>Q60873</accession>
<proteinExistence type="evidence at protein level"/>
<protein>
    <recommendedName>
        <fullName>DnaJ homolog subfamily C member 3</fullName>
    </recommendedName>
    <alternativeName>
        <fullName>Interferon-induced, double-stranded RNA-activated protein kinase inhibitor</fullName>
    </alternativeName>
    <alternativeName>
        <fullName>Protein kinase inhibitor of 58 kDa</fullName>
        <shortName>Protein kinase inhibitor p58</shortName>
    </alternativeName>
</protein>
<evidence type="ECO:0000250" key="1"/>
<evidence type="ECO:0000250" key="2">
    <source>
        <dbReference type="UniProtKB" id="Q13217"/>
    </source>
</evidence>
<evidence type="ECO:0000250" key="3">
    <source>
        <dbReference type="UniProtKB" id="Q27968"/>
    </source>
</evidence>
<evidence type="ECO:0000255" key="4"/>
<evidence type="ECO:0000255" key="5">
    <source>
        <dbReference type="PROSITE-ProRule" id="PRU00286"/>
    </source>
</evidence>
<evidence type="ECO:0000256" key="6">
    <source>
        <dbReference type="SAM" id="MobiDB-lite"/>
    </source>
</evidence>
<evidence type="ECO:0000269" key="7">
    <source>
    </source>
</evidence>
<evidence type="ECO:0000269" key="8">
    <source>
    </source>
</evidence>
<evidence type="ECO:0000269" key="9">
    <source>
    </source>
</evidence>
<evidence type="ECO:0000269" key="10">
    <source>
    </source>
</evidence>
<evidence type="ECO:0000305" key="11"/>
<evidence type="ECO:0007829" key="12">
    <source>
        <dbReference type="PDB" id="3IEG"/>
    </source>
</evidence>
<dbReference type="EMBL" id="U28423">
    <property type="protein sequence ID" value="AAC52592.1"/>
    <property type="molecule type" value="mRNA"/>
</dbReference>
<dbReference type="EMBL" id="BC013766">
    <property type="protein sequence ID" value="AAH13766.1"/>
    <property type="molecule type" value="mRNA"/>
</dbReference>
<dbReference type="CCDS" id="CCDS37012.1"/>
<dbReference type="RefSeq" id="NP_032955.2">
    <property type="nucleotide sequence ID" value="NM_008929.3"/>
</dbReference>
<dbReference type="PDB" id="3IEG">
    <property type="method" value="X-ray"/>
    <property type="resolution" value="2.51 A"/>
    <property type="chains" value="A/B=35-393"/>
</dbReference>
<dbReference type="PDBsum" id="3IEG"/>
<dbReference type="SMR" id="Q91YW3"/>
<dbReference type="BioGRID" id="781938">
    <property type="interactions" value="14"/>
</dbReference>
<dbReference type="FunCoup" id="Q91YW3">
    <property type="interactions" value="3681"/>
</dbReference>
<dbReference type="IntAct" id="Q91YW3">
    <property type="interactions" value="3"/>
</dbReference>
<dbReference type="MINT" id="Q91YW3"/>
<dbReference type="STRING" id="10090.ENSMUSP00000022734"/>
<dbReference type="iPTMnet" id="Q91YW3"/>
<dbReference type="PhosphoSitePlus" id="Q91YW3"/>
<dbReference type="SwissPalm" id="Q91YW3"/>
<dbReference type="REPRODUCTION-2DPAGE" id="Q91YW3"/>
<dbReference type="jPOST" id="Q91YW3"/>
<dbReference type="PaxDb" id="10090-ENSMUSP00000022734"/>
<dbReference type="PeptideAtlas" id="Q91YW3"/>
<dbReference type="ProteomicsDB" id="279561"/>
<dbReference type="Pumba" id="Q91YW3"/>
<dbReference type="Antibodypedia" id="24863">
    <property type="antibodies" value="164 antibodies from 29 providers"/>
</dbReference>
<dbReference type="DNASU" id="100037258"/>
<dbReference type="Ensembl" id="ENSMUST00000022734.9">
    <property type="protein sequence ID" value="ENSMUSP00000022734.8"/>
    <property type="gene ID" value="ENSMUSG00000022136.9"/>
</dbReference>
<dbReference type="GeneID" id="100037258"/>
<dbReference type="KEGG" id="mmu:100037258"/>
<dbReference type="UCSC" id="uc007uzd.2">
    <property type="organism name" value="mouse"/>
</dbReference>
<dbReference type="AGR" id="MGI:107373"/>
<dbReference type="CTD" id="5611"/>
<dbReference type="MGI" id="MGI:107373">
    <property type="gene designation" value="Dnajc3"/>
</dbReference>
<dbReference type="VEuPathDB" id="HostDB:ENSMUSG00000022136"/>
<dbReference type="eggNOG" id="KOG0624">
    <property type="taxonomic scope" value="Eukaryota"/>
</dbReference>
<dbReference type="GeneTree" id="ENSGT00940000159806"/>
<dbReference type="HOGENOM" id="CLU_015935_0_0_1"/>
<dbReference type="InParanoid" id="Q91YW3"/>
<dbReference type="OMA" id="PFAHFQH"/>
<dbReference type="OrthoDB" id="1726119at2759"/>
<dbReference type="PhylomeDB" id="Q91YW3"/>
<dbReference type="TreeFam" id="TF105162"/>
<dbReference type="Reactome" id="R-MMU-381426">
    <property type="pathway name" value="Regulation of Insulin-like Growth Factor (IGF) transport and uptake by Insulin-like Growth Factor Binding Proteins (IGFBPs)"/>
</dbReference>
<dbReference type="Reactome" id="R-MMU-6798695">
    <property type="pathway name" value="Neutrophil degranulation"/>
</dbReference>
<dbReference type="Reactome" id="R-MMU-8957275">
    <property type="pathway name" value="Post-translational protein phosphorylation"/>
</dbReference>
<dbReference type="Reactome" id="R-MMU-9833482">
    <property type="pathway name" value="PKR-mediated signaling"/>
</dbReference>
<dbReference type="BioGRID-ORCS" id="100037258">
    <property type="hits" value="2 hits in 77 CRISPR screens"/>
</dbReference>
<dbReference type="ChiTaRS" id="Dnajc3">
    <property type="organism name" value="mouse"/>
</dbReference>
<dbReference type="EvolutionaryTrace" id="Q91YW3"/>
<dbReference type="PRO" id="PR:Q91YW3"/>
<dbReference type="Proteomes" id="UP000000589">
    <property type="component" value="Chromosome 14"/>
</dbReference>
<dbReference type="RNAct" id="Q91YW3">
    <property type="molecule type" value="protein"/>
</dbReference>
<dbReference type="Bgee" id="ENSMUSG00000022136">
    <property type="expression patterns" value="Expressed in lacrimal gland and 258 other cell types or tissues"/>
</dbReference>
<dbReference type="ExpressionAtlas" id="Q91YW3">
    <property type="expression patterns" value="baseline and differential"/>
</dbReference>
<dbReference type="GO" id="GO:0005737">
    <property type="term" value="C:cytoplasm"/>
    <property type="evidence" value="ECO:0000314"/>
    <property type="project" value="MGI"/>
</dbReference>
<dbReference type="GO" id="GO:0005829">
    <property type="term" value="C:cytosol"/>
    <property type="evidence" value="ECO:0000314"/>
    <property type="project" value="UniProtKB"/>
</dbReference>
<dbReference type="GO" id="GO:0005783">
    <property type="term" value="C:endoplasmic reticulum"/>
    <property type="evidence" value="ECO:0000314"/>
    <property type="project" value="UniProtKB"/>
</dbReference>
<dbReference type="GO" id="GO:0005788">
    <property type="term" value="C:endoplasmic reticulum lumen"/>
    <property type="evidence" value="ECO:0000314"/>
    <property type="project" value="BHF-UCL"/>
</dbReference>
<dbReference type="GO" id="GO:0051787">
    <property type="term" value="F:misfolded protein binding"/>
    <property type="evidence" value="ECO:0000314"/>
    <property type="project" value="BHF-UCL"/>
</dbReference>
<dbReference type="GO" id="GO:0019901">
    <property type="term" value="F:protein kinase binding"/>
    <property type="evidence" value="ECO:0000314"/>
    <property type="project" value="UniProtKB"/>
</dbReference>
<dbReference type="GO" id="GO:0004860">
    <property type="term" value="F:protein kinase inhibitor activity"/>
    <property type="evidence" value="ECO:0000314"/>
    <property type="project" value="UniProtKB"/>
</dbReference>
<dbReference type="GO" id="GO:0051087">
    <property type="term" value="F:protein-folding chaperone binding"/>
    <property type="evidence" value="ECO:0000314"/>
    <property type="project" value="UniProtKB"/>
</dbReference>
<dbReference type="GO" id="GO:0070417">
    <property type="term" value="P:cellular response to cold"/>
    <property type="evidence" value="ECO:0000314"/>
    <property type="project" value="UniProtKB"/>
</dbReference>
<dbReference type="GO" id="GO:0030968">
    <property type="term" value="P:endoplasmic reticulum unfolded protein response"/>
    <property type="evidence" value="ECO:0000305"/>
    <property type="project" value="BHF-UCL"/>
</dbReference>
<dbReference type="GO" id="GO:0043066">
    <property type="term" value="P:negative regulation of apoptotic process"/>
    <property type="evidence" value="ECO:0007669"/>
    <property type="project" value="Ensembl"/>
</dbReference>
<dbReference type="GO" id="GO:1903912">
    <property type="term" value="P:negative regulation of endoplasmic reticulum stress-induced eIF2 alpha phosphorylation"/>
    <property type="evidence" value="ECO:0000314"/>
    <property type="project" value="UniProtKB"/>
</dbReference>
<dbReference type="GO" id="GO:1902010">
    <property type="term" value="P:negative regulation of translation in response to endoplasmic reticulum stress"/>
    <property type="evidence" value="ECO:0007669"/>
    <property type="project" value="Ensembl"/>
</dbReference>
<dbReference type="GO" id="GO:0036494">
    <property type="term" value="P:positive regulation of translation initiation in response to endoplasmic reticulum stress"/>
    <property type="evidence" value="ECO:0000314"/>
    <property type="project" value="UniProtKB"/>
</dbReference>
<dbReference type="GO" id="GO:0051603">
    <property type="term" value="P:proteolysis involved in protein catabolic process"/>
    <property type="evidence" value="ECO:0000314"/>
    <property type="project" value="BHF-UCL"/>
</dbReference>
<dbReference type="GO" id="GO:0034976">
    <property type="term" value="P:response to endoplasmic reticulum stress"/>
    <property type="evidence" value="ECO:0000315"/>
    <property type="project" value="UniProtKB"/>
</dbReference>
<dbReference type="CDD" id="cd06257">
    <property type="entry name" value="DnaJ"/>
    <property type="match status" value="1"/>
</dbReference>
<dbReference type="FunFam" id="1.25.40.10:FF:000122">
    <property type="entry name" value="DnaJ (Hsp40) homolog, subfamily C, member 3"/>
    <property type="match status" value="1"/>
</dbReference>
<dbReference type="FunFam" id="1.10.287.110:FF:000015">
    <property type="entry name" value="dnaJ homolog subfamily C member 3"/>
    <property type="match status" value="1"/>
</dbReference>
<dbReference type="Gene3D" id="1.10.287.110">
    <property type="entry name" value="DnaJ domain"/>
    <property type="match status" value="1"/>
</dbReference>
<dbReference type="Gene3D" id="1.25.40.10">
    <property type="entry name" value="Tetratricopeptide repeat domain"/>
    <property type="match status" value="1"/>
</dbReference>
<dbReference type="InterPro" id="IPR051727">
    <property type="entry name" value="DnaJ_C3_Co-chaperones"/>
</dbReference>
<dbReference type="InterPro" id="IPR001623">
    <property type="entry name" value="DnaJ_domain"/>
</dbReference>
<dbReference type="InterPro" id="IPR036869">
    <property type="entry name" value="J_dom_sf"/>
</dbReference>
<dbReference type="InterPro" id="IPR011990">
    <property type="entry name" value="TPR-like_helical_dom_sf"/>
</dbReference>
<dbReference type="InterPro" id="IPR019734">
    <property type="entry name" value="TPR_rpt"/>
</dbReference>
<dbReference type="PANTHER" id="PTHR44140:SF3">
    <property type="entry name" value="DNAJ HOMOLOG SUBFAMILY C MEMBER 3"/>
    <property type="match status" value="1"/>
</dbReference>
<dbReference type="PANTHER" id="PTHR44140">
    <property type="entry name" value="LD25575P"/>
    <property type="match status" value="1"/>
</dbReference>
<dbReference type="Pfam" id="PF00226">
    <property type="entry name" value="DnaJ"/>
    <property type="match status" value="1"/>
</dbReference>
<dbReference type="Pfam" id="PF00515">
    <property type="entry name" value="TPR_1"/>
    <property type="match status" value="1"/>
</dbReference>
<dbReference type="Pfam" id="PF13432">
    <property type="entry name" value="TPR_16"/>
    <property type="match status" value="1"/>
</dbReference>
<dbReference type="Pfam" id="PF14559">
    <property type="entry name" value="TPR_19"/>
    <property type="match status" value="1"/>
</dbReference>
<dbReference type="Pfam" id="PF13181">
    <property type="entry name" value="TPR_8"/>
    <property type="match status" value="1"/>
</dbReference>
<dbReference type="PRINTS" id="PR00625">
    <property type="entry name" value="JDOMAIN"/>
</dbReference>
<dbReference type="SMART" id="SM00271">
    <property type="entry name" value="DnaJ"/>
    <property type="match status" value="1"/>
</dbReference>
<dbReference type="SMART" id="SM00028">
    <property type="entry name" value="TPR"/>
    <property type="match status" value="7"/>
</dbReference>
<dbReference type="SUPFAM" id="SSF46565">
    <property type="entry name" value="Chaperone J-domain"/>
    <property type="match status" value="1"/>
</dbReference>
<dbReference type="SUPFAM" id="SSF48452">
    <property type="entry name" value="TPR-like"/>
    <property type="match status" value="3"/>
</dbReference>
<dbReference type="PROSITE" id="PS50076">
    <property type="entry name" value="DNAJ_2"/>
    <property type="match status" value="1"/>
</dbReference>
<dbReference type="PROSITE" id="PS50005">
    <property type="entry name" value="TPR"/>
    <property type="match status" value="8"/>
</dbReference>
<dbReference type="PROSITE" id="PS50293">
    <property type="entry name" value="TPR_REGION"/>
    <property type="match status" value="1"/>
</dbReference>
<gene>
    <name type="primary">Dnajc3</name>
    <name type="synonym">P58ipk</name>
</gene>
<sequence>MVAPGSVGSRLGAVFPFLLVLVDLQYEGAECGVNADVEKHLELGKKLLAAGQLADALSQFHAAVDGDPDNYIAYYRRATVFLAMGKSKAALPDLTKVIALKMDFTAARLQRGHLLLKQGKLDEAEDDFKKVLKSNPSEQEEKEAESQLVKADEMQRLRSQALDAFDGADYTAAITFLDKILEVCVWDAELRELRAECFIKEGEPRKAISDLKAASKLKSDNTEAFYKISTLYYQLGDHELSLSEVRECLKLDQDHKRCFAHYKQVKKLNKLIESAEELIRDGRYTDATSKYESVMKTEPSVAEYTVRSKERICHCFSKDEKPVEAIRICSEVLQMEPDNVNALKDRAEAYLIEEMYDEAIQDYEAAQEHNENDQQIREGLEKAQRLLKQSQKRDYYKILGVKRNAKKQEIIKAYRKLALQWHPDNFQNEEEKKKAEKKFIDIAAAKEVLSDPEMRKKFDDGEDPLDAESQQGGGGNPFHRSWNSWQGFNPFSSGGPFRFKFHFN</sequence>
<name>DNJC3_MOUSE</name>
<comment type="function">
    <text evidence="2 3 7 8 9">Involved in the unfolded protein response (UPR) during endoplasmic reticulum (ER) stress. Acts as a negative regulator of the EIF2AK4/GCN2 kinase activity by preventing the phosphorylation of eIF-2-alpha at 'Ser-52' and hence attenuating general protein synthesis under ER stress, hypothermic and amino acid starving stress conditions (PubMed:25329545). Co-chaperone of HSPA8/HSC70, it stimulates its ATPase activity. May inhibit both the autophosphorylation of EIF2AK2/PKR and the ability of EIF2AK2 to catalyze phosphorylation of the EIF2A. May inhibit EIF2AK3/PERK activity (By similarity).</text>
</comment>
<comment type="subunit">
    <text evidence="2 7 9">Interacts with EIF2AK4/GCN2; this interaction occurs under endoplasmic reticulum (ER) stress, hypothermic and amino acid starving stress conditions and inhibits EIF2AK4/GCN2 kinase activity (PubMed:25329545). Interacts with EIF2AK3 (PubMed:12446838). Interacts with EIF2AK2. Forms a trimeric complex with DNAJB1 and HSPA8. Interacts with THAP12 (By similarity).</text>
</comment>
<comment type="interaction">
    <interactant intactId="EBI-8381770">
        <id>Q91YW3</id>
    </interactant>
    <interactant intactId="EBI-354921">
        <id>P11021</id>
        <label>HSPA5</label>
    </interactant>
    <organismsDiffer>true</organismsDiffer>
    <experiments>2</experiments>
</comment>
<comment type="subcellular location">
    <subcellularLocation>
        <location evidence="7">Endoplasmic reticulum</location>
    </subcellularLocation>
</comment>
<comment type="tissue specificity">
    <text evidence="10">Widely expressed, with high level in the liver.</text>
</comment>
<comment type="induction">
    <text evidence="7">Up-regulated during an endoplasmic reticulum stress.</text>
</comment>
<comment type="domain">
    <text evidence="1">The J domain mediates interaction with HSPA8.</text>
</comment>
<comment type="domain">
    <text>Binding to misfolded proteins is mediated by a hydrophobic patch forming a large groove within the first two TPR repeats.</text>
</comment>
<organism>
    <name type="scientific">Mus musculus</name>
    <name type="common">Mouse</name>
    <dbReference type="NCBI Taxonomy" id="10090"/>
    <lineage>
        <taxon>Eukaryota</taxon>
        <taxon>Metazoa</taxon>
        <taxon>Chordata</taxon>
        <taxon>Craniata</taxon>
        <taxon>Vertebrata</taxon>
        <taxon>Euteleostomi</taxon>
        <taxon>Mammalia</taxon>
        <taxon>Eutheria</taxon>
        <taxon>Euarchontoglires</taxon>
        <taxon>Glires</taxon>
        <taxon>Rodentia</taxon>
        <taxon>Myomorpha</taxon>
        <taxon>Muroidea</taxon>
        <taxon>Muridae</taxon>
        <taxon>Murinae</taxon>
        <taxon>Mus</taxon>
        <taxon>Mus</taxon>
    </lineage>
</organism>
<reference key="1">
    <citation type="journal article" date="1996" name="Gene">
        <title>Cloning, expression, and cellular localization of the oncogenic 58-kDa inhibitor of the RNA-activated human and mouse protein kinase.</title>
        <authorList>
            <person name="Korth M.J."/>
            <person name="Lyons C.N."/>
            <person name="Wambach M."/>
            <person name="Katze M.G."/>
        </authorList>
    </citation>
    <scope>NUCLEOTIDE SEQUENCE [MRNA]</scope>
    <scope>TISSUE SPECIFICITY</scope>
</reference>
<reference key="2">
    <citation type="journal article" date="2004" name="Genome Res.">
        <title>The status, quality, and expansion of the NIH full-length cDNA project: the Mammalian Gene Collection (MGC).</title>
        <authorList>
            <consortium name="The MGC Project Team"/>
        </authorList>
    </citation>
    <scope>NUCLEOTIDE SEQUENCE [LARGE SCALE MRNA]</scope>
    <source>
        <strain>Czech II</strain>
        <tissue>Mammary tumor</tissue>
    </source>
</reference>
<reference key="3">
    <citation type="journal article" date="2002" name="Proc. Natl. Acad. Sci. U.S.A.">
        <title>Control of PERK eIF2alpha kinase activity by the endoplasmic reticulum stress-induced molecular chaperone P58IPK.</title>
        <authorList>
            <person name="Yan W."/>
            <person name="Frank C.L."/>
            <person name="Korth M.J."/>
            <person name="Sopher B.L."/>
            <person name="Novoa I."/>
            <person name="Ron D."/>
            <person name="Katze M.G."/>
        </authorList>
    </citation>
    <scope>FUNCTION</scope>
    <scope>SUBCELLULAR LOCATION</scope>
    <scope>INTERACTION WITH EIF2AK3</scope>
    <scope>INDUCTION</scope>
</reference>
<reference key="4">
    <citation type="journal article" date="2010" name="Cell">
        <title>A tissue-specific atlas of mouse protein phosphorylation and expression.</title>
        <authorList>
            <person name="Huttlin E.L."/>
            <person name="Jedrychowski M.P."/>
            <person name="Elias J.E."/>
            <person name="Goswami T."/>
            <person name="Rad R."/>
            <person name="Beausoleil S.A."/>
            <person name="Villen J."/>
            <person name="Haas W."/>
            <person name="Sowa M.E."/>
            <person name="Gygi S.P."/>
        </authorList>
    </citation>
    <scope>IDENTIFICATION BY MASS SPECTROMETRY [LARGE SCALE ANALYSIS]</scope>
    <source>
        <tissue>Brain</tissue>
        <tissue>Brown adipose tissue</tissue>
        <tissue>Heart</tissue>
        <tissue>Kidney</tissue>
        <tissue>Liver</tissue>
        <tissue>Lung</tissue>
        <tissue>Pancreas</tissue>
        <tissue>Spleen</tissue>
        <tissue>Testis</tissue>
    </source>
</reference>
<reference key="5">
    <citation type="journal article" date="2015" name="Biochem. J.">
        <title>p58IPK is an inhibitor of the eIF2alpha kinase GCN2 and its localization and expression underpin protein synthesis and ER processing capacity.</title>
        <authorList>
            <person name="Roobol A."/>
            <person name="Roobol J."/>
            <person name="Bastide A."/>
            <person name="Knight J.R."/>
            <person name="Willis A.E."/>
            <person name="Smales C.M."/>
        </authorList>
    </citation>
    <scope>FUNCTION</scope>
    <scope>INTERACTION WITH EIF2AK4</scope>
</reference>
<reference key="6">
    <citation type="journal article" date="2010" name="J. Mol. Biol.">
        <title>Crystal structure of P58(IPK) TPR fragment reveals the mechanism for its molecular chaperone activity in UPR.</title>
        <authorList>
            <person name="Tao J."/>
            <person name="Petrova K."/>
            <person name="Ron D."/>
            <person name="Sha B."/>
        </authorList>
    </citation>
    <scope>X-RAY CRYSTALLOGRAPHY (2.51 ANGSTROMS) OF 35-393</scope>
    <scope>FUNCTION</scope>
    <scope>MUTAGENESIS OF LEU-48; TYR-71; TYR-75; PHE-104 AND TRP-186</scope>
</reference>
<feature type="signal peptide" evidence="4">
    <location>
        <begin position="1"/>
        <end position="31"/>
    </location>
</feature>
<feature type="chain" id="PRO_0000071046" description="DnaJ homolog subfamily C member 3">
    <location>
        <begin position="32"/>
        <end position="504"/>
    </location>
</feature>
<feature type="repeat" description="TPR 1">
    <location>
        <begin position="37"/>
        <end position="70"/>
    </location>
</feature>
<feature type="repeat" description="TPR 2">
    <location>
        <begin position="72"/>
        <end position="104"/>
    </location>
</feature>
<feature type="repeat" description="TPR 3">
    <location>
        <begin position="105"/>
        <end position="138"/>
    </location>
</feature>
<feature type="repeat" description="TPR 4">
    <location>
        <begin position="154"/>
        <end position="187"/>
    </location>
</feature>
<feature type="repeat" description="TPR 5">
    <location>
        <begin position="188"/>
        <end position="221"/>
    </location>
</feature>
<feature type="repeat" description="TPR 6">
    <location>
        <begin position="222"/>
        <end position="255"/>
    </location>
</feature>
<feature type="repeat" description="TPR 7">
    <location>
        <begin position="268"/>
        <end position="301"/>
    </location>
</feature>
<feature type="repeat" description="TPR 8">
    <location>
        <begin position="306"/>
        <end position="339"/>
    </location>
</feature>
<feature type="repeat" description="TPR 9">
    <location>
        <begin position="340"/>
        <end position="373"/>
    </location>
</feature>
<feature type="domain" description="J" evidence="5">
    <location>
        <begin position="394"/>
        <end position="462"/>
    </location>
</feature>
<feature type="region of interest" description="Flexible linker" evidence="1">
    <location>
        <begin position="375"/>
        <end position="393"/>
    </location>
</feature>
<feature type="region of interest" description="Disordered" evidence="6">
    <location>
        <begin position="451"/>
        <end position="481"/>
    </location>
</feature>
<feature type="modified residue" description="Phosphoserine" evidence="2">
    <location>
        <position position="274"/>
    </location>
</feature>
<feature type="disulfide bond" evidence="1">
    <location>
        <begin position="248"/>
        <end position="258"/>
    </location>
</feature>
<feature type="disulfide bond" evidence="1">
    <location>
        <begin position="313"/>
        <end position="329"/>
    </location>
</feature>
<feature type="mutagenesis site" description="Reduces binding affinity for misfolded proteins by 40%." evidence="8">
    <original>L</original>
    <variation>D</variation>
    <location>
        <position position="48"/>
    </location>
</feature>
<feature type="mutagenesis site" description="Reduces binding affinity for misfolded proteins by 40%." evidence="8">
    <original>Y</original>
    <variation>A</variation>
    <location>
        <position position="71"/>
    </location>
</feature>
<feature type="mutagenesis site" description="Reduces binding affinity for misfolded proteins by 40%." evidence="8">
    <original>Y</original>
    <variation>H</variation>
    <location>
        <position position="75"/>
    </location>
</feature>
<feature type="mutagenesis site" description="Reduces binding affinity for misfolded proteins by 40%." evidence="8">
    <original>F</original>
    <variation>A</variation>
    <location>
        <position position="104"/>
    </location>
</feature>
<feature type="mutagenesis site" description="Doesn't affect binding of misfolded proteins." evidence="8">
    <original>W</original>
    <variation>A</variation>
    <location>
        <position position="186"/>
    </location>
</feature>
<feature type="sequence conflict" description="In Ref. 1; AAC52592." evidence="11" ref="1">
    <original>AAL</original>
    <variation>RRV</variation>
    <location>
        <begin position="89"/>
        <end position="91"/>
    </location>
</feature>
<feature type="sequence conflict" description="In Ref. 1; AAC52592." evidence="11" ref="1">
    <original>S</original>
    <variation>C</variation>
    <location>
        <position position="134"/>
    </location>
</feature>
<feature type="sequence conflict" description="In Ref. 1; AAC52592." evidence="11" ref="1">
    <original>A</original>
    <variation>T</variation>
    <location>
        <position position="405"/>
    </location>
</feature>
<feature type="helix" evidence="12">
    <location>
        <begin position="36"/>
        <end position="49"/>
    </location>
</feature>
<feature type="helix" evidence="12">
    <location>
        <begin position="53"/>
        <end position="66"/>
    </location>
</feature>
<feature type="helix" evidence="12">
    <location>
        <begin position="71"/>
        <end position="84"/>
    </location>
</feature>
<feature type="helix" evidence="12">
    <location>
        <begin position="87"/>
        <end position="100"/>
    </location>
</feature>
<feature type="helix" evidence="12">
    <location>
        <begin position="105"/>
        <end position="118"/>
    </location>
</feature>
<feature type="helix" evidence="12">
    <location>
        <begin position="121"/>
        <end position="132"/>
    </location>
</feature>
<feature type="helix" evidence="12">
    <location>
        <begin position="138"/>
        <end position="166"/>
    </location>
</feature>
<feature type="helix" evidence="12">
    <location>
        <begin position="170"/>
        <end position="183"/>
    </location>
</feature>
<feature type="helix" evidence="12">
    <location>
        <begin position="188"/>
        <end position="200"/>
    </location>
</feature>
<feature type="helix" evidence="12">
    <location>
        <begin position="204"/>
        <end position="215"/>
    </location>
</feature>
<feature type="helix" evidence="12">
    <location>
        <begin position="222"/>
        <end position="235"/>
    </location>
</feature>
<feature type="helix" evidence="12">
    <location>
        <begin position="238"/>
        <end position="251"/>
    </location>
</feature>
<feature type="helix" evidence="12">
    <location>
        <begin position="256"/>
        <end position="280"/>
    </location>
</feature>
<feature type="helix" evidence="12">
    <location>
        <begin position="284"/>
        <end position="297"/>
    </location>
</feature>
<feature type="helix" evidence="12">
    <location>
        <begin position="302"/>
        <end position="318"/>
    </location>
</feature>
<feature type="helix" evidence="12">
    <location>
        <begin position="322"/>
        <end position="335"/>
    </location>
</feature>
<feature type="helix" evidence="12">
    <location>
        <begin position="340"/>
        <end position="352"/>
    </location>
</feature>
<feature type="helix" evidence="12">
    <location>
        <begin position="356"/>
        <end position="367"/>
    </location>
</feature>
<feature type="helix" evidence="12">
    <location>
        <begin position="374"/>
        <end position="391"/>
    </location>
</feature>